<organism>
    <name type="scientific">Pyricularia oryzae (strain 70-15 / ATCC MYA-4617 / FGSC 8958)</name>
    <name type="common">Rice blast fungus</name>
    <name type="synonym">Magnaporthe oryzae</name>
    <dbReference type="NCBI Taxonomy" id="242507"/>
    <lineage>
        <taxon>Eukaryota</taxon>
        <taxon>Fungi</taxon>
        <taxon>Dikarya</taxon>
        <taxon>Ascomycota</taxon>
        <taxon>Pezizomycotina</taxon>
        <taxon>Sordariomycetes</taxon>
        <taxon>Sordariomycetidae</taxon>
        <taxon>Magnaporthales</taxon>
        <taxon>Pyriculariaceae</taxon>
        <taxon>Pyricularia</taxon>
    </lineage>
</organism>
<gene>
    <name type="primary">SUB2</name>
    <name type="ORF">MGCH7_ch7g559</name>
    <name type="ORF">MGG_02806</name>
</gene>
<name>SUB2_PYRO7</name>
<accession>A4RBS3</accession>
<accession>G4NIX6</accession>
<accession>Q2KFX6</accession>
<keyword id="KW-0067">ATP-binding</keyword>
<keyword id="KW-0347">Helicase</keyword>
<keyword id="KW-0378">Hydrolase</keyword>
<keyword id="KW-0507">mRNA processing</keyword>
<keyword id="KW-0508">mRNA splicing</keyword>
<keyword id="KW-0509">mRNA transport</keyword>
<keyword id="KW-0547">Nucleotide-binding</keyword>
<keyword id="KW-0539">Nucleus</keyword>
<keyword id="KW-1185">Reference proteome</keyword>
<keyword id="KW-0694">RNA-binding</keyword>
<keyword id="KW-0747">Spliceosome</keyword>
<keyword id="KW-0813">Transport</keyword>
<comment type="function">
    <text evidence="1">ATP-binding RNA helicase involved in transcription elongation and required for the export of mRNA out of the nucleus. SUB2 also plays a role in pre-mRNA splicing and spliceosome assembly. May be involved in rDNA and telomeric silencing, and maintenance of genome integrity (By similarity).</text>
</comment>
<comment type="catalytic activity">
    <reaction>
        <text>ATP + H2O = ADP + phosphate + H(+)</text>
        <dbReference type="Rhea" id="RHEA:13065"/>
        <dbReference type="ChEBI" id="CHEBI:15377"/>
        <dbReference type="ChEBI" id="CHEBI:15378"/>
        <dbReference type="ChEBI" id="CHEBI:30616"/>
        <dbReference type="ChEBI" id="CHEBI:43474"/>
        <dbReference type="ChEBI" id="CHEBI:456216"/>
        <dbReference type="EC" id="3.6.4.13"/>
    </reaction>
</comment>
<comment type="subcellular location">
    <subcellularLocation>
        <location evidence="1">Nucleus</location>
    </subcellularLocation>
</comment>
<comment type="domain">
    <text>The Q motif is unique to and characteristic of the DEAD box family of RNA helicases and controls ATP binding and hydrolysis.</text>
</comment>
<comment type="similarity">
    <text evidence="5">Belongs to the DEAD box helicase family. DECD subfamily.</text>
</comment>
<comment type="sequence caution" evidence="5">
    <conflict type="erroneous gene model prediction">
        <sequence resource="EMBL-CDS" id="EAQ71152"/>
    </conflict>
</comment>
<protein>
    <recommendedName>
        <fullName>ATP-dependent RNA helicase SUB2</fullName>
        <ecNumber>3.6.4.13</ecNumber>
    </recommendedName>
</protein>
<reference key="1">
    <citation type="submission" date="2005-01" db="EMBL/GenBank/DDBJ databases">
        <title>The sequence of Magnaporthe grisea chromosome 7.</title>
        <authorList>
            <person name="Thon M.R."/>
            <person name="Pan H."/>
            <person name="Diener A."/>
            <person name="Papalas J."/>
            <person name="Taro A."/>
            <person name="Mitchell T.K."/>
            <person name="Dean R.A."/>
        </authorList>
    </citation>
    <scope>NUCLEOTIDE SEQUENCE [LARGE SCALE GENOMIC DNA]</scope>
    <source>
        <strain>70-15 / ATCC MYA-4617 / FGSC 8958</strain>
    </source>
</reference>
<reference key="2">
    <citation type="journal article" date="2005" name="Nature">
        <title>The genome sequence of the rice blast fungus Magnaporthe grisea.</title>
        <authorList>
            <person name="Dean R.A."/>
            <person name="Talbot N.J."/>
            <person name="Ebbole D.J."/>
            <person name="Farman M.L."/>
            <person name="Mitchell T.K."/>
            <person name="Orbach M.J."/>
            <person name="Thon M.R."/>
            <person name="Kulkarni R."/>
            <person name="Xu J.-R."/>
            <person name="Pan H."/>
            <person name="Read N.D."/>
            <person name="Lee Y.-H."/>
            <person name="Carbone I."/>
            <person name="Brown D."/>
            <person name="Oh Y.Y."/>
            <person name="Donofrio N."/>
            <person name="Jeong J.S."/>
            <person name="Soanes D.M."/>
            <person name="Djonovic S."/>
            <person name="Kolomiets E."/>
            <person name="Rehmeyer C."/>
            <person name="Li W."/>
            <person name="Harding M."/>
            <person name="Kim S."/>
            <person name="Lebrun M.-H."/>
            <person name="Bohnert H."/>
            <person name="Coughlan S."/>
            <person name="Butler J."/>
            <person name="Calvo S.E."/>
            <person name="Ma L.-J."/>
            <person name="Nicol R."/>
            <person name="Purcell S."/>
            <person name="Nusbaum C."/>
            <person name="Galagan J.E."/>
            <person name="Birren B.W."/>
        </authorList>
    </citation>
    <scope>NUCLEOTIDE SEQUENCE [LARGE SCALE GENOMIC DNA]</scope>
    <source>
        <strain>70-15 / ATCC MYA-4617 / FGSC 8958</strain>
    </source>
</reference>
<proteinExistence type="inferred from homology"/>
<dbReference type="EC" id="3.6.4.13"/>
<dbReference type="EMBL" id="CM000230">
    <property type="protein sequence ID" value="EAQ71152.1"/>
    <property type="status" value="ALT_SEQ"/>
    <property type="molecule type" value="Genomic_DNA"/>
</dbReference>
<dbReference type="EMBL" id="CM001237">
    <property type="protein sequence ID" value="EHA46192.1"/>
    <property type="molecule type" value="Genomic_DNA"/>
</dbReference>
<dbReference type="RefSeq" id="XP_003720935.1">
    <property type="nucleotide sequence ID" value="XM_003720887.1"/>
</dbReference>
<dbReference type="SMR" id="A4RBS3"/>
<dbReference type="FunCoup" id="A4RBS3">
    <property type="interactions" value="1214"/>
</dbReference>
<dbReference type="STRING" id="242507.A4RBS3"/>
<dbReference type="EnsemblFungi" id="MGG_02806T0">
    <property type="protein sequence ID" value="MGG_02806T0"/>
    <property type="gene ID" value="MGG_02806"/>
</dbReference>
<dbReference type="GeneID" id="2682359"/>
<dbReference type="KEGG" id="mgr:MGG_02806"/>
<dbReference type="VEuPathDB" id="FungiDB:MGG_02806"/>
<dbReference type="eggNOG" id="KOG0329">
    <property type="taxonomic scope" value="Eukaryota"/>
</dbReference>
<dbReference type="HOGENOM" id="CLU_003041_1_0_1"/>
<dbReference type="InParanoid" id="A4RBS3"/>
<dbReference type="OMA" id="YAHVEPK"/>
<dbReference type="OrthoDB" id="10265785at2759"/>
<dbReference type="Proteomes" id="UP000009058">
    <property type="component" value="Chromosome 7"/>
</dbReference>
<dbReference type="GO" id="GO:0000781">
    <property type="term" value="C:chromosome, telomeric region"/>
    <property type="evidence" value="ECO:0007669"/>
    <property type="project" value="EnsemblFungi"/>
</dbReference>
<dbReference type="GO" id="GO:0005681">
    <property type="term" value="C:spliceosomal complex"/>
    <property type="evidence" value="ECO:0007669"/>
    <property type="project" value="UniProtKB-KW"/>
</dbReference>
<dbReference type="GO" id="GO:0000346">
    <property type="term" value="C:transcription export complex"/>
    <property type="evidence" value="ECO:0007669"/>
    <property type="project" value="EnsemblFungi"/>
</dbReference>
<dbReference type="GO" id="GO:0005524">
    <property type="term" value="F:ATP binding"/>
    <property type="evidence" value="ECO:0007669"/>
    <property type="project" value="UniProtKB-KW"/>
</dbReference>
<dbReference type="GO" id="GO:0016887">
    <property type="term" value="F:ATP hydrolysis activity"/>
    <property type="evidence" value="ECO:0007669"/>
    <property type="project" value="RHEA"/>
</dbReference>
<dbReference type="GO" id="GO:0003723">
    <property type="term" value="F:RNA binding"/>
    <property type="evidence" value="ECO:0007669"/>
    <property type="project" value="UniProtKB-KW"/>
</dbReference>
<dbReference type="GO" id="GO:0003724">
    <property type="term" value="F:RNA helicase activity"/>
    <property type="evidence" value="ECO:0007669"/>
    <property type="project" value="UniProtKB-EC"/>
</dbReference>
<dbReference type="GO" id="GO:0031124">
    <property type="term" value="P:mRNA 3'-end processing"/>
    <property type="evidence" value="ECO:0007669"/>
    <property type="project" value="EnsemblFungi"/>
</dbReference>
<dbReference type="GO" id="GO:0006406">
    <property type="term" value="P:mRNA export from nucleus"/>
    <property type="evidence" value="ECO:0007669"/>
    <property type="project" value="EnsemblFungi"/>
</dbReference>
<dbReference type="GO" id="GO:0000398">
    <property type="term" value="P:mRNA splicing, via spliceosome"/>
    <property type="evidence" value="ECO:0007669"/>
    <property type="project" value="EnsemblFungi"/>
</dbReference>
<dbReference type="GO" id="GO:0031509">
    <property type="term" value="P:subtelomeric heterochromatin formation"/>
    <property type="evidence" value="ECO:0007669"/>
    <property type="project" value="EnsemblFungi"/>
</dbReference>
<dbReference type="GO" id="GO:0006368">
    <property type="term" value="P:transcription elongation by RNA polymerase II"/>
    <property type="evidence" value="ECO:0007669"/>
    <property type="project" value="EnsemblFungi"/>
</dbReference>
<dbReference type="GO" id="GO:0006283">
    <property type="term" value="P:transcription-coupled nucleotide-excision repair"/>
    <property type="evidence" value="ECO:0007669"/>
    <property type="project" value="EnsemblFungi"/>
</dbReference>
<dbReference type="CDD" id="cd17950">
    <property type="entry name" value="DEADc_DDX39"/>
    <property type="match status" value="1"/>
</dbReference>
<dbReference type="CDD" id="cd18787">
    <property type="entry name" value="SF2_C_DEAD"/>
    <property type="match status" value="1"/>
</dbReference>
<dbReference type="FunFam" id="3.40.50.300:FF:000111">
    <property type="entry name" value="DEAD-box ATP-dependent RNA helicase"/>
    <property type="match status" value="1"/>
</dbReference>
<dbReference type="FunFam" id="3.40.50.300:FF:000168">
    <property type="entry name" value="DEAD-box ATP-dependent RNA helicase 56-like"/>
    <property type="match status" value="1"/>
</dbReference>
<dbReference type="Gene3D" id="3.40.50.300">
    <property type="entry name" value="P-loop containing nucleotide triphosphate hydrolases"/>
    <property type="match status" value="2"/>
</dbReference>
<dbReference type="InterPro" id="IPR011545">
    <property type="entry name" value="DEAD/DEAH_box_helicase_dom"/>
</dbReference>
<dbReference type="InterPro" id="IPR014001">
    <property type="entry name" value="Helicase_ATP-bd"/>
</dbReference>
<dbReference type="InterPro" id="IPR001650">
    <property type="entry name" value="Helicase_C-like"/>
</dbReference>
<dbReference type="InterPro" id="IPR027417">
    <property type="entry name" value="P-loop_NTPase"/>
</dbReference>
<dbReference type="InterPro" id="IPR014014">
    <property type="entry name" value="RNA_helicase_DEAD_Q_motif"/>
</dbReference>
<dbReference type="PANTHER" id="PTHR47958">
    <property type="entry name" value="ATP-DEPENDENT RNA HELICASE DBP3"/>
    <property type="match status" value="1"/>
</dbReference>
<dbReference type="Pfam" id="PF00270">
    <property type="entry name" value="DEAD"/>
    <property type="match status" value="1"/>
</dbReference>
<dbReference type="Pfam" id="PF00271">
    <property type="entry name" value="Helicase_C"/>
    <property type="match status" value="1"/>
</dbReference>
<dbReference type="SMART" id="SM00487">
    <property type="entry name" value="DEXDc"/>
    <property type="match status" value="1"/>
</dbReference>
<dbReference type="SMART" id="SM00490">
    <property type="entry name" value="HELICc"/>
    <property type="match status" value="1"/>
</dbReference>
<dbReference type="SUPFAM" id="SSF52540">
    <property type="entry name" value="P-loop containing nucleoside triphosphate hydrolases"/>
    <property type="match status" value="1"/>
</dbReference>
<dbReference type="PROSITE" id="PS51192">
    <property type="entry name" value="HELICASE_ATP_BIND_1"/>
    <property type="match status" value="1"/>
</dbReference>
<dbReference type="PROSITE" id="PS51194">
    <property type="entry name" value="HELICASE_CTER"/>
    <property type="match status" value="1"/>
</dbReference>
<dbReference type="PROSITE" id="PS51195">
    <property type="entry name" value="Q_MOTIF"/>
    <property type="match status" value="1"/>
</dbReference>
<evidence type="ECO:0000250" key="1"/>
<evidence type="ECO:0000255" key="2">
    <source>
        <dbReference type="PROSITE-ProRule" id="PRU00541"/>
    </source>
</evidence>
<evidence type="ECO:0000255" key="3">
    <source>
        <dbReference type="PROSITE-ProRule" id="PRU00542"/>
    </source>
</evidence>
<evidence type="ECO:0000256" key="4">
    <source>
        <dbReference type="SAM" id="MobiDB-lite"/>
    </source>
</evidence>
<evidence type="ECO:0000305" key="5"/>
<feature type="chain" id="PRO_0000294646" description="ATP-dependent RNA helicase SUB2">
    <location>
        <begin position="1"/>
        <end position="436"/>
    </location>
</feature>
<feature type="domain" description="Helicase ATP-binding" evidence="2">
    <location>
        <begin position="83"/>
        <end position="258"/>
    </location>
</feature>
<feature type="domain" description="Helicase C-terminal" evidence="3">
    <location>
        <begin position="270"/>
        <end position="431"/>
    </location>
</feature>
<feature type="region of interest" description="Disordered" evidence="4">
    <location>
        <begin position="1"/>
        <end position="33"/>
    </location>
</feature>
<feature type="short sequence motif" description="Q motif">
    <location>
        <begin position="52"/>
        <end position="80"/>
    </location>
</feature>
<feature type="short sequence motif" description="DEAD box">
    <location>
        <begin position="205"/>
        <end position="208"/>
    </location>
</feature>
<feature type="compositionally biased region" description="Acidic residues" evidence="4">
    <location>
        <begin position="1"/>
        <end position="16"/>
    </location>
</feature>
<feature type="binding site" evidence="2">
    <location>
        <begin position="96"/>
        <end position="103"/>
    </location>
    <ligand>
        <name>ATP</name>
        <dbReference type="ChEBI" id="CHEBI:30616"/>
    </ligand>
</feature>
<sequence length="436" mass="49163">MSAEEDLIDYSDEELNTNETAAPAADSNGKKGELAAGGNVDKKGSYVGIHSTGFRDFLLKPELLRAIGDCGFEHPSEVQQTCIPQAMLGGDIICQAKSGLGKTAVFVLTTLQQVEPVAGECSVLVMCHTRELAFQIRNEYNRFSKYMPDIKTGVFFGGTPIQKDAELLKNKETHPHIIVGTPGRLNALVRDKFLRLSSVRIFVLDECDKMLDQIDMRRDVQEIFRATPQQKQVMMFSATLSDEIKPICKKFMQNPTEHYVDEDTKLTLHGLQQYFVALEEKEKNRKLNELLDDLQFNQVIIFVKSTLRATELDKLLRECNFPSIAVHSGVSQEERIRRYKEFKEFNKRICVATDVFGRGIDIERINLAINYDMPADADSYLHRVGRAGRFGTKGLAVSFVTNDQDKEVLTAIEKRFEVPIPEFPKDGIDASTYMAS</sequence>